<gene>
    <name evidence="1" type="primary">ydiU</name>
    <name evidence="1" type="synonym">selO</name>
    <name type="ordered locus">Bxeno_A2155</name>
    <name type="ORF">Bxe_A2276</name>
</gene>
<accession>Q13YZ6</accession>
<keyword id="KW-0067">ATP-binding</keyword>
<keyword id="KW-0460">Magnesium</keyword>
<keyword id="KW-0464">Manganese</keyword>
<keyword id="KW-0479">Metal-binding</keyword>
<keyword id="KW-0547">Nucleotide-binding</keyword>
<keyword id="KW-0548">Nucleotidyltransferase</keyword>
<keyword id="KW-1185">Reference proteome</keyword>
<keyword id="KW-0808">Transferase</keyword>
<name>SELO_PARXL</name>
<feature type="chain" id="PRO_0000271817" description="Protein nucleotidyltransferase YdiU">
    <location>
        <begin position="1"/>
        <end position="518"/>
    </location>
</feature>
<feature type="active site" description="Proton acceptor" evidence="1">
    <location>
        <position position="270"/>
    </location>
</feature>
<feature type="binding site" evidence="1">
    <location>
        <position position="109"/>
    </location>
    <ligand>
        <name>ATP</name>
        <dbReference type="ChEBI" id="CHEBI:30616"/>
    </ligand>
</feature>
<feature type="binding site" evidence="1">
    <location>
        <position position="111"/>
    </location>
    <ligand>
        <name>ATP</name>
        <dbReference type="ChEBI" id="CHEBI:30616"/>
    </ligand>
</feature>
<feature type="binding site" evidence="1">
    <location>
        <position position="112"/>
    </location>
    <ligand>
        <name>ATP</name>
        <dbReference type="ChEBI" id="CHEBI:30616"/>
    </ligand>
</feature>
<feature type="binding site" evidence="1">
    <location>
        <position position="131"/>
    </location>
    <ligand>
        <name>ATP</name>
        <dbReference type="ChEBI" id="CHEBI:30616"/>
    </ligand>
</feature>
<feature type="binding site" evidence="1">
    <location>
        <position position="143"/>
    </location>
    <ligand>
        <name>ATP</name>
        <dbReference type="ChEBI" id="CHEBI:30616"/>
    </ligand>
</feature>
<feature type="binding site" evidence="1">
    <location>
        <position position="144"/>
    </location>
    <ligand>
        <name>ATP</name>
        <dbReference type="ChEBI" id="CHEBI:30616"/>
    </ligand>
</feature>
<feature type="binding site" evidence="1">
    <location>
        <position position="194"/>
    </location>
    <ligand>
        <name>ATP</name>
        <dbReference type="ChEBI" id="CHEBI:30616"/>
    </ligand>
</feature>
<feature type="binding site" evidence="1">
    <location>
        <position position="201"/>
    </location>
    <ligand>
        <name>ATP</name>
        <dbReference type="ChEBI" id="CHEBI:30616"/>
    </ligand>
</feature>
<feature type="binding site" evidence="1">
    <location>
        <position position="271"/>
    </location>
    <ligand>
        <name>Mg(2+)</name>
        <dbReference type="ChEBI" id="CHEBI:18420"/>
    </ligand>
</feature>
<feature type="binding site" evidence="1">
    <location>
        <position position="280"/>
    </location>
    <ligand>
        <name>ATP</name>
        <dbReference type="ChEBI" id="CHEBI:30616"/>
    </ligand>
</feature>
<feature type="binding site" evidence="1">
    <location>
        <position position="280"/>
    </location>
    <ligand>
        <name>Mg(2+)</name>
        <dbReference type="ChEBI" id="CHEBI:18420"/>
    </ligand>
</feature>
<comment type="function">
    <text evidence="1">Nucleotidyltransferase involved in the post-translational modification of proteins. It can catalyze the addition of adenosine monophosphate (AMP) or uridine monophosphate (UMP) to a protein, resulting in modifications known as AMPylation and UMPylation.</text>
</comment>
<comment type="catalytic activity">
    <reaction evidence="1">
        <text>L-seryl-[protein] + ATP = 3-O-(5'-adenylyl)-L-seryl-[protein] + diphosphate</text>
        <dbReference type="Rhea" id="RHEA:58120"/>
        <dbReference type="Rhea" id="RHEA-COMP:9863"/>
        <dbReference type="Rhea" id="RHEA-COMP:15073"/>
        <dbReference type="ChEBI" id="CHEBI:29999"/>
        <dbReference type="ChEBI" id="CHEBI:30616"/>
        <dbReference type="ChEBI" id="CHEBI:33019"/>
        <dbReference type="ChEBI" id="CHEBI:142516"/>
        <dbReference type="EC" id="2.7.7.108"/>
    </reaction>
</comment>
<comment type="catalytic activity">
    <reaction evidence="1">
        <text>L-threonyl-[protein] + ATP = 3-O-(5'-adenylyl)-L-threonyl-[protein] + diphosphate</text>
        <dbReference type="Rhea" id="RHEA:54292"/>
        <dbReference type="Rhea" id="RHEA-COMP:11060"/>
        <dbReference type="Rhea" id="RHEA-COMP:13847"/>
        <dbReference type="ChEBI" id="CHEBI:30013"/>
        <dbReference type="ChEBI" id="CHEBI:30616"/>
        <dbReference type="ChEBI" id="CHEBI:33019"/>
        <dbReference type="ChEBI" id="CHEBI:138113"/>
        <dbReference type="EC" id="2.7.7.108"/>
    </reaction>
</comment>
<comment type="catalytic activity">
    <reaction evidence="1">
        <text>L-tyrosyl-[protein] + ATP = O-(5'-adenylyl)-L-tyrosyl-[protein] + diphosphate</text>
        <dbReference type="Rhea" id="RHEA:54288"/>
        <dbReference type="Rhea" id="RHEA-COMP:10136"/>
        <dbReference type="Rhea" id="RHEA-COMP:13846"/>
        <dbReference type="ChEBI" id="CHEBI:30616"/>
        <dbReference type="ChEBI" id="CHEBI:33019"/>
        <dbReference type="ChEBI" id="CHEBI:46858"/>
        <dbReference type="ChEBI" id="CHEBI:83624"/>
        <dbReference type="EC" id="2.7.7.108"/>
    </reaction>
</comment>
<comment type="catalytic activity">
    <reaction evidence="1">
        <text>L-histidyl-[protein] + UTP = N(tele)-(5'-uridylyl)-L-histidyl-[protein] + diphosphate</text>
        <dbReference type="Rhea" id="RHEA:83891"/>
        <dbReference type="Rhea" id="RHEA-COMP:9745"/>
        <dbReference type="Rhea" id="RHEA-COMP:20239"/>
        <dbReference type="ChEBI" id="CHEBI:29979"/>
        <dbReference type="ChEBI" id="CHEBI:33019"/>
        <dbReference type="ChEBI" id="CHEBI:46398"/>
        <dbReference type="ChEBI" id="CHEBI:233474"/>
    </reaction>
</comment>
<comment type="catalytic activity">
    <reaction evidence="1">
        <text>L-seryl-[protein] + UTP = O-(5'-uridylyl)-L-seryl-[protein] + diphosphate</text>
        <dbReference type="Rhea" id="RHEA:64604"/>
        <dbReference type="Rhea" id="RHEA-COMP:9863"/>
        <dbReference type="Rhea" id="RHEA-COMP:16635"/>
        <dbReference type="ChEBI" id="CHEBI:29999"/>
        <dbReference type="ChEBI" id="CHEBI:33019"/>
        <dbReference type="ChEBI" id="CHEBI:46398"/>
        <dbReference type="ChEBI" id="CHEBI:156051"/>
    </reaction>
</comment>
<comment type="catalytic activity">
    <reaction evidence="1">
        <text>L-tyrosyl-[protein] + UTP = O-(5'-uridylyl)-L-tyrosyl-[protein] + diphosphate</text>
        <dbReference type="Rhea" id="RHEA:83887"/>
        <dbReference type="Rhea" id="RHEA-COMP:10136"/>
        <dbReference type="Rhea" id="RHEA-COMP:20238"/>
        <dbReference type="ChEBI" id="CHEBI:33019"/>
        <dbReference type="ChEBI" id="CHEBI:46398"/>
        <dbReference type="ChEBI" id="CHEBI:46858"/>
        <dbReference type="ChEBI" id="CHEBI:90602"/>
    </reaction>
</comment>
<comment type="cofactor">
    <cofactor evidence="1">
        <name>Mg(2+)</name>
        <dbReference type="ChEBI" id="CHEBI:18420"/>
    </cofactor>
    <cofactor evidence="1">
        <name>Mn(2+)</name>
        <dbReference type="ChEBI" id="CHEBI:29035"/>
    </cofactor>
</comment>
<comment type="similarity">
    <text evidence="1">Belongs to the SELO family.</text>
</comment>
<organism>
    <name type="scientific">Paraburkholderia xenovorans (strain LB400)</name>
    <dbReference type="NCBI Taxonomy" id="266265"/>
    <lineage>
        <taxon>Bacteria</taxon>
        <taxon>Pseudomonadati</taxon>
        <taxon>Pseudomonadota</taxon>
        <taxon>Betaproteobacteria</taxon>
        <taxon>Burkholderiales</taxon>
        <taxon>Burkholderiaceae</taxon>
        <taxon>Paraburkholderia</taxon>
    </lineage>
</organism>
<evidence type="ECO:0000255" key="1">
    <source>
        <dbReference type="HAMAP-Rule" id="MF_00692"/>
    </source>
</evidence>
<reference key="1">
    <citation type="journal article" date="2006" name="Proc. Natl. Acad. Sci. U.S.A.">
        <title>Burkholderia xenovorans LB400 harbors a multi-replicon, 9.73-Mbp genome shaped for versatility.</title>
        <authorList>
            <person name="Chain P.S.G."/>
            <person name="Denef V.J."/>
            <person name="Konstantinidis K.T."/>
            <person name="Vergez L.M."/>
            <person name="Agullo L."/>
            <person name="Reyes V.L."/>
            <person name="Hauser L."/>
            <person name="Cordova M."/>
            <person name="Gomez L."/>
            <person name="Gonzalez M."/>
            <person name="Land M."/>
            <person name="Lao V."/>
            <person name="Larimer F."/>
            <person name="LiPuma J.J."/>
            <person name="Mahenthiralingam E."/>
            <person name="Malfatti S.A."/>
            <person name="Marx C.J."/>
            <person name="Parnell J.J."/>
            <person name="Ramette A."/>
            <person name="Richardson P."/>
            <person name="Seeger M."/>
            <person name="Smith D."/>
            <person name="Spilker T."/>
            <person name="Sul W.J."/>
            <person name="Tsoi T.V."/>
            <person name="Ulrich L.E."/>
            <person name="Zhulin I.B."/>
            <person name="Tiedje J.M."/>
        </authorList>
    </citation>
    <scope>NUCLEOTIDE SEQUENCE [LARGE SCALE GENOMIC DNA]</scope>
    <source>
        <strain>LB400</strain>
    </source>
</reference>
<sequence length="518" mass="57058">MSFSPSIAGLSGPLSALSDALTTAPESAFASLGSVFLTRLPAAPLSAPYVVGFSAETAALLGLEPGIENDPAFAELFSGNATREWPAEALPYASVYSGHQFGVWAGQLGDGRALGLGEVEHGGRRFELQLKGAGRTPYSRMGDGRAVLRSSIREYLCSEAMHHLGIPTTRALCVIGSDQPVRRETVETAAVVTRVAPSFVRFGHFEHFYSNDRTDALRALADHVIERFYPHCREADDPYLALLNEAVISTADLMVEWQAVGFCHGVMNTDNMSILGLTIDYGPFGFMDGFDAGYICNHSDSQGRYAYRMQPQIAYWNLFCLAQGLLPLLGEKHEESVRGDKAIEDAQRVLGGFKDRFAPALERRMRAKLGLETERAGDDALANRLFEVMHANRADFTLTFRNLARVSKHDASGDAAVRDLFLDRAAFDAWVNDYRARLSEETREDAARAIAMNRVNPKFVLRNHLAETAIRRAKEKDFSEVERLAAVLRRPFDEQPEHEAYAGLPPDWASSLEVSCSS</sequence>
<proteinExistence type="inferred from homology"/>
<protein>
    <recommendedName>
        <fullName evidence="1">Protein nucleotidyltransferase YdiU</fullName>
        <ecNumber evidence="1">2.7.7.-</ecNumber>
    </recommendedName>
    <alternativeName>
        <fullName evidence="1">Protein adenylyltransferase YdiU</fullName>
        <ecNumber evidence="1">2.7.7.108</ecNumber>
    </alternativeName>
    <alternativeName>
        <fullName evidence="1">Protein uridylyltransferase YdiU</fullName>
        <ecNumber evidence="1">2.7.7.-</ecNumber>
    </alternativeName>
</protein>
<dbReference type="EC" id="2.7.7.-" evidence="1"/>
<dbReference type="EC" id="2.7.7.108" evidence="1"/>
<dbReference type="EMBL" id="CP000270">
    <property type="protein sequence ID" value="ABE30693.1"/>
    <property type="molecule type" value="Genomic_DNA"/>
</dbReference>
<dbReference type="RefSeq" id="WP_011488316.1">
    <property type="nucleotide sequence ID" value="NC_007951.1"/>
</dbReference>
<dbReference type="SMR" id="Q13YZ6"/>
<dbReference type="STRING" id="266265.Bxe_A2276"/>
<dbReference type="KEGG" id="bxb:DR64_4425"/>
<dbReference type="KEGG" id="bxe:Bxe_A2276"/>
<dbReference type="PATRIC" id="fig|266265.5.peg.2257"/>
<dbReference type="eggNOG" id="COG0397">
    <property type="taxonomic scope" value="Bacteria"/>
</dbReference>
<dbReference type="OrthoDB" id="9776281at2"/>
<dbReference type="Proteomes" id="UP000001817">
    <property type="component" value="Chromosome 1"/>
</dbReference>
<dbReference type="GO" id="GO:0070733">
    <property type="term" value="F:AMPylase activity"/>
    <property type="evidence" value="ECO:0007669"/>
    <property type="project" value="RHEA"/>
</dbReference>
<dbReference type="GO" id="GO:0005524">
    <property type="term" value="F:ATP binding"/>
    <property type="evidence" value="ECO:0007669"/>
    <property type="project" value="UniProtKB-UniRule"/>
</dbReference>
<dbReference type="GO" id="GO:0000287">
    <property type="term" value="F:magnesium ion binding"/>
    <property type="evidence" value="ECO:0007669"/>
    <property type="project" value="UniProtKB-UniRule"/>
</dbReference>
<dbReference type="HAMAP" id="MF_00692">
    <property type="entry name" value="YdiU_SelO"/>
    <property type="match status" value="1"/>
</dbReference>
<dbReference type="InterPro" id="IPR003846">
    <property type="entry name" value="SelO"/>
</dbReference>
<dbReference type="NCBIfam" id="NF000658">
    <property type="entry name" value="PRK00029.1"/>
    <property type="match status" value="1"/>
</dbReference>
<dbReference type="PANTHER" id="PTHR32057">
    <property type="entry name" value="PROTEIN ADENYLYLTRANSFERASE SELO, MITOCHONDRIAL"/>
    <property type="match status" value="1"/>
</dbReference>
<dbReference type="PANTHER" id="PTHR32057:SF14">
    <property type="entry name" value="PROTEIN ADENYLYLTRANSFERASE SELO, MITOCHONDRIAL"/>
    <property type="match status" value="1"/>
</dbReference>
<dbReference type="Pfam" id="PF02696">
    <property type="entry name" value="SelO"/>
    <property type="match status" value="1"/>
</dbReference>